<proteinExistence type="inferred from homology"/>
<evidence type="ECO:0000255" key="1">
    <source>
        <dbReference type="HAMAP-Rule" id="MF_01322"/>
    </source>
</evidence>
<comment type="function">
    <text evidence="1">DNA-dependent RNA polymerase catalyzes the transcription of DNA into RNA using the four ribonucleoside triphosphates as substrates.</text>
</comment>
<comment type="catalytic activity">
    <reaction evidence="1">
        <text>RNA(n) + a ribonucleoside 5'-triphosphate = RNA(n+1) + diphosphate</text>
        <dbReference type="Rhea" id="RHEA:21248"/>
        <dbReference type="Rhea" id="RHEA-COMP:14527"/>
        <dbReference type="Rhea" id="RHEA-COMP:17342"/>
        <dbReference type="ChEBI" id="CHEBI:33019"/>
        <dbReference type="ChEBI" id="CHEBI:61557"/>
        <dbReference type="ChEBI" id="CHEBI:140395"/>
        <dbReference type="EC" id="2.7.7.6"/>
    </reaction>
</comment>
<comment type="cofactor">
    <cofactor evidence="1">
        <name>Mg(2+)</name>
        <dbReference type="ChEBI" id="CHEBI:18420"/>
    </cofactor>
    <text evidence="1">Binds 1 Mg(2+) ion per subunit.</text>
</comment>
<comment type="cofactor">
    <cofactor evidence="1">
        <name>Zn(2+)</name>
        <dbReference type="ChEBI" id="CHEBI:29105"/>
    </cofactor>
    <text evidence="1">Binds 2 Zn(2+) ions per subunit.</text>
</comment>
<comment type="subunit">
    <text evidence="1">The RNAP catalytic core consists of 2 alpha, 1 beta, 1 beta' and 1 omega subunit. When a sigma factor is associated with the core the holoenzyme is formed, which can initiate transcription.</text>
</comment>
<comment type="similarity">
    <text evidence="1">Belongs to the RNA polymerase beta' chain family.</text>
</comment>
<sequence length="1057" mass="118612">MIDVNNFHYMKIGLASPEKIRSWSFGEVKKPETINYRTLKPEKDGLFCERIFGPTKDWECSCGKYKRVRYKGMVCDRCGVEVTKSKVRRERMGHIELAAPVSHIWYFKGIPSRMGLLLDMSPRALEEVIYFASYVVVDPGPTGLEKKTLLSEAEFRDYYDKYPGQFVAKMGAEGIKDLLEEIDLDEELKLLRDELESATGQRLTRAIKRLEVVESFRNSGNKPSWMILDVLPIIPPEIRPMAQLDGGRFATSDLNDLYRRVINRNNRLKRLLDLGAPGIIVQNEKRMLQEAVDALIDNGRRGRPVTGPGNRPLKSLSHMLKGKQGRFRQNLLGKRVDYSGRSVIAVGPSLKMYQCGLPKEMALELFKPFVMKELVQREIATNIKNAKSKIERMDDEVWDVLEEVIREHPVLLNRAPTLHRLGIQAFEPTLVEGRAIRLHPLVTTAYNADFDGDQMAVHVPLSKEAQAEARMLMLAAQNILNPKDGKPVVTPSQDMVLGNYYLTLERKDAVNTGAIFNNTNEVLKAYANGFVHLHTRIGVHASSFNNPTFTEEQNKKILATSVGKIIFNEIIPDSFAYINEPTQENLERKTPNRNFIDPTTLGEGGLKEYFENEELIEPFNKKFLGNIIAEVFNRFSITDTSMMLDRMKDLGFKFSSKAGITVGVADIVVLPDKQQILDEHEKLVDRITKQFNRGLITEEERYNAVVEIWTDAKDQIQGELMQSLDKTNPIFMMSDSGARGNASNFTQLAGMRGLMAAPSGKIIELPITSSFREGLTVLEYFISTHGARKGLADTALKTADSGYLTRRLVDVAQDVIVREEDCGTDRGLLVSDIKEGTEMIEPFIERIEGRYSKETIRHPETDEIIIRPDELITPEIAKKITDAGIEQMYIRSAFTCNARHGVCEKCYGKNLATGEKVEVGEAVGTIAAQSIGEPGTQLTMRTFHTGGVAGSDITQGLPRIQEIFEARNPKGQAVITEIEGVVEDIKLAKDRQQEIVVKGANETRSYLASGTSRIIVEIGQPVQRGEVLTEGSIEPKNYLSVAGLNATESYLLKEVQK</sequence>
<keyword id="KW-0240">DNA-directed RNA polymerase</keyword>
<keyword id="KW-0460">Magnesium</keyword>
<keyword id="KW-0479">Metal-binding</keyword>
<keyword id="KW-0548">Nucleotidyltransferase</keyword>
<keyword id="KW-0804">Transcription</keyword>
<keyword id="KW-0808">Transferase</keyword>
<keyword id="KW-0862">Zinc</keyword>
<name>RPOC_STAAU</name>
<feature type="chain" id="PRO_0000067798" description="DNA-directed RNA polymerase subunit beta'">
    <location>
        <begin position="1"/>
        <end position="1057" status="greater than"/>
    </location>
</feature>
<feature type="binding site" evidence="1">
    <location>
        <position position="60"/>
    </location>
    <ligand>
        <name>Zn(2+)</name>
        <dbReference type="ChEBI" id="CHEBI:29105"/>
        <label>1</label>
    </ligand>
</feature>
<feature type="binding site" evidence="1">
    <location>
        <position position="62"/>
    </location>
    <ligand>
        <name>Zn(2+)</name>
        <dbReference type="ChEBI" id="CHEBI:29105"/>
        <label>1</label>
    </ligand>
</feature>
<feature type="binding site" evidence="1">
    <location>
        <position position="75"/>
    </location>
    <ligand>
        <name>Zn(2+)</name>
        <dbReference type="ChEBI" id="CHEBI:29105"/>
        <label>1</label>
    </ligand>
</feature>
<feature type="binding site" evidence="1">
    <location>
        <position position="78"/>
    </location>
    <ligand>
        <name>Zn(2+)</name>
        <dbReference type="ChEBI" id="CHEBI:29105"/>
        <label>1</label>
    </ligand>
</feature>
<feature type="binding site" evidence="1">
    <location>
        <position position="449"/>
    </location>
    <ligand>
        <name>Mg(2+)</name>
        <dbReference type="ChEBI" id="CHEBI:18420"/>
    </ligand>
</feature>
<feature type="binding site" evidence="1">
    <location>
        <position position="451"/>
    </location>
    <ligand>
        <name>Mg(2+)</name>
        <dbReference type="ChEBI" id="CHEBI:18420"/>
    </ligand>
</feature>
<feature type="binding site" evidence="1">
    <location>
        <position position="453"/>
    </location>
    <ligand>
        <name>Mg(2+)</name>
        <dbReference type="ChEBI" id="CHEBI:18420"/>
    </ligand>
</feature>
<feature type="binding site" evidence="1">
    <location>
        <position position="822"/>
    </location>
    <ligand>
        <name>Zn(2+)</name>
        <dbReference type="ChEBI" id="CHEBI:29105"/>
        <label>2</label>
    </ligand>
</feature>
<feature type="binding site" evidence="1">
    <location>
        <position position="896"/>
    </location>
    <ligand>
        <name>Zn(2+)</name>
        <dbReference type="ChEBI" id="CHEBI:29105"/>
        <label>2</label>
    </ligand>
</feature>
<feature type="binding site" evidence="1">
    <location>
        <position position="903"/>
    </location>
    <ligand>
        <name>Zn(2+)</name>
        <dbReference type="ChEBI" id="CHEBI:29105"/>
        <label>2</label>
    </ligand>
</feature>
<feature type="binding site" evidence="1">
    <location>
        <position position="906"/>
    </location>
    <ligand>
        <name>Zn(2+)</name>
        <dbReference type="ChEBI" id="CHEBI:29105"/>
        <label>2</label>
    </ligand>
</feature>
<feature type="non-terminal residue">
    <location>
        <position position="1057"/>
    </location>
</feature>
<gene>
    <name evidence="1" type="primary">rpoC</name>
</gene>
<organism>
    <name type="scientific">Staphylococcus aureus</name>
    <dbReference type="NCBI Taxonomy" id="1280"/>
    <lineage>
        <taxon>Bacteria</taxon>
        <taxon>Bacillati</taxon>
        <taxon>Bacillota</taxon>
        <taxon>Bacilli</taxon>
        <taxon>Bacillales</taxon>
        <taxon>Staphylococcaceae</taxon>
        <taxon>Staphylococcus</taxon>
    </lineage>
</organism>
<dbReference type="EC" id="2.7.7.6" evidence="1"/>
<dbReference type="EMBL" id="X89233">
    <property type="protein sequence ID" value="CAA61517.1"/>
    <property type="molecule type" value="Genomic_DNA"/>
</dbReference>
<dbReference type="PIR" id="T10908">
    <property type="entry name" value="T10908"/>
</dbReference>
<dbReference type="SMR" id="P0C1T4"/>
<dbReference type="BindingDB" id="P0C1T4"/>
<dbReference type="GO" id="GO:0000428">
    <property type="term" value="C:DNA-directed RNA polymerase complex"/>
    <property type="evidence" value="ECO:0007669"/>
    <property type="project" value="UniProtKB-KW"/>
</dbReference>
<dbReference type="GO" id="GO:0003677">
    <property type="term" value="F:DNA binding"/>
    <property type="evidence" value="ECO:0007669"/>
    <property type="project" value="InterPro"/>
</dbReference>
<dbReference type="GO" id="GO:0003899">
    <property type="term" value="F:DNA-directed RNA polymerase activity"/>
    <property type="evidence" value="ECO:0007669"/>
    <property type="project" value="UniProtKB-EC"/>
</dbReference>
<dbReference type="GO" id="GO:0046872">
    <property type="term" value="F:metal ion binding"/>
    <property type="evidence" value="ECO:0007669"/>
    <property type="project" value="UniProtKB-KW"/>
</dbReference>
<dbReference type="GO" id="GO:0006351">
    <property type="term" value="P:DNA-templated transcription"/>
    <property type="evidence" value="ECO:0007669"/>
    <property type="project" value="InterPro"/>
</dbReference>
<dbReference type="CDD" id="cd01609">
    <property type="entry name" value="RNAP_beta'_N"/>
    <property type="match status" value="1"/>
</dbReference>
<dbReference type="FunFam" id="1.10.132.30:FF:000003">
    <property type="entry name" value="DNA-directed RNA polymerase subunit beta"/>
    <property type="match status" value="1"/>
</dbReference>
<dbReference type="FunFam" id="4.10.860.120:FF:000001">
    <property type="entry name" value="DNA-directed RNA polymerase subunit beta"/>
    <property type="match status" value="1"/>
</dbReference>
<dbReference type="Gene3D" id="1.10.132.30">
    <property type="match status" value="1"/>
</dbReference>
<dbReference type="Gene3D" id="1.10.40.90">
    <property type="match status" value="1"/>
</dbReference>
<dbReference type="Gene3D" id="2.40.40.20">
    <property type="match status" value="1"/>
</dbReference>
<dbReference type="Gene3D" id="2.40.50.100">
    <property type="match status" value="1"/>
</dbReference>
<dbReference type="Gene3D" id="4.10.860.120">
    <property type="entry name" value="RNA polymerase II, clamp domain"/>
    <property type="match status" value="1"/>
</dbReference>
<dbReference type="Gene3D" id="1.10.274.100">
    <property type="entry name" value="RNA polymerase Rpb1, domain 3"/>
    <property type="match status" value="1"/>
</dbReference>
<dbReference type="HAMAP" id="MF_01322">
    <property type="entry name" value="RNApol_bact_RpoC"/>
    <property type="match status" value="1"/>
</dbReference>
<dbReference type="InterPro" id="IPR045867">
    <property type="entry name" value="DNA-dir_RpoC_beta_prime"/>
</dbReference>
<dbReference type="InterPro" id="IPR012754">
    <property type="entry name" value="DNA-dir_RpoC_beta_prime_bact"/>
</dbReference>
<dbReference type="InterPro" id="IPR000722">
    <property type="entry name" value="RNA_pol_asu"/>
</dbReference>
<dbReference type="InterPro" id="IPR006592">
    <property type="entry name" value="RNA_pol_N"/>
</dbReference>
<dbReference type="InterPro" id="IPR007080">
    <property type="entry name" value="RNA_pol_Rpb1_1"/>
</dbReference>
<dbReference type="InterPro" id="IPR007066">
    <property type="entry name" value="RNA_pol_Rpb1_3"/>
</dbReference>
<dbReference type="InterPro" id="IPR042102">
    <property type="entry name" value="RNA_pol_Rpb1_3_sf"/>
</dbReference>
<dbReference type="InterPro" id="IPR007083">
    <property type="entry name" value="RNA_pol_Rpb1_4"/>
</dbReference>
<dbReference type="InterPro" id="IPR007081">
    <property type="entry name" value="RNA_pol_Rpb1_5"/>
</dbReference>
<dbReference type="InterPro" id="IPR044893">
    <property type="entry name" value="RNA_pol_Rpb1_clamp_domain"/>
</dbReference>
<dbReference type="InterPro" id="IPR038120">
    <property type="entry name" value="Rpb1_funnel_sf"/>
</dbReference>
<dbReference type="NCBIfam" id="TIGR02386">
    <property type="entry name" value="rpoC_TIGR"/>
    <property type="match status" value="1"/>
</dbReference>
<dbReference type="PANTHER" id="PTHR19376">
    <property type="entry name" value="DNA-DIRECTED RNA POLYMERASE"/>
    <property type="match status" value="1"/>
</dbReference>
<dbReference type="PANTHER" id="PTHR19376:SF54">
    <property type="entry name" value="DNA-DIRECTED RNA POLYMERASE SUBUNIT BETA"/>
    <property type="match status" value="1"/>
</dbReference>
<dbReference type="Pfam" id="PF04997">
    <property type="entry name" value="RNA_pol_Rpb1_1"/>
    <property type="match status" value="1"/>
</dbReference>
<dbReference type="Pfam" id="PF00623">
    <property type="entry name" value="RNA_pol_Rpb1_2"/>
    <property type="match status" value="1"/>
</dbReference>
<dbReference type="Pfam" id="PF04983">
    <property type="entry name" value="RNA_pol_Rpb1_3"/>
    <property type="match status" value="1"/>
</dbReference>
<dbReference type="Pfam" id="PF05000">
    <property type="entry name" value="RNA_pol_Rpb1_4"/>
    <property type="match status" value="1"/>
</dbReference>
<dbReference type="Pfam" id="PF04998">
    <property type="entry name" value="RNA_pol_Rpb1_5"/>
    <property type="match status" value="1"/>
</dbReference>
<dbReference type="SMART" id="SM00663">
    <property type="entry name" value="RPOLA_N"/>
    <property type="match status" value="1"/>
</dbReference>
<dbReference type="SUPFAM" id="SSF64484">
    <property type="entry name" value="beta and beta-prime subunits of DNA dependent RNA-polymerase"/>
    <property type="match status" value="1"/>
</dbReference>
<reference key="1">
    <citation type="submission" date="1996-08" db="EMBL/GenBank/DDBJ databases">
        <title>Cloning part of the rpoC gene encoding the B' subunit of the DNA-dependent RNA polymerase from some Gram-positive bacteria and comparative amino acid sequence.</title>
        <authorList>
            <person name="Morse R."/>
            <person name="Collins M.D."/>
            <person name="Balsdon J.T."/>
            <person name="Reading S."/>
            <person name="Richardson P.T."/>
        </authorList>
    </citation>
    <scope>NUCLEOTIDE SEQUENCE [GENOMIC DNA]</scope>
    <source>
        <strain>ATCC 12600 / DSM 20231 / IAM 12544 / NCDO 949 / NCTC 8532</strain>
    </source>
</reference>
<protein>
    <recommendedName>
        <fullName evidence="1">DNA-directed RNA polymerase subunit beta'</fullName>
        <shortName evidence="1">RNAP subunit beta'</shortName>
        <ecNumber evidence="1">2.7.7.6</ecNumber>
    </recommendedName>
    <alternativeName>
        <fullName evidence="1">RNA polymerase subunit beta'</fullName>
    </alternativeName>
    <alternativeName>
        <fullName evidence="1">Transcriptase subunit beta'</fullName>
    </alternativeName>
</protein>
<accession>P0C1T4</accession>
<accession>P47770</accession>
<accession>P77942</accession>